<feature type="chain" id="PRO_0000396090" description="Uncharacterized protein MSMEG_6518/MSMEI_6344">
    <location>
        <begin position="1"/>
        <end position="129"/>
    </location>
</feature>
<feature type="cross-link" description="Isoglutamyl lysine isopeptide (Lys-Gln) (interchain with Q-Cter in protein Pup)" evidence="1">
    <location>
        <position position="121"/>
    </location>
</feature>
<gene>
    <name type="ordered locus">MSMEG_6518</name>
    <name type="ordered locus">MSMEI_6344</name>
</gene>
<accession>A0R6E3</accession>
<accession>I7FN93</accession>
<comment type="miscellaneous">
    <text evidence="2">Binds 2-aminothiazole antibiotics, which are antitubercular agents (PubMed:30416491).</text>
</comment>
<comment type="sequence caution" evidence="3">
    <conflict type="erroneous initiation">
        <sequence resource="EMBL-CDS" id="AFP42770"/>
    </conflict>
    <text>Extended N-terminus.</text>
</comment>
<sequence>MYTAAIDALPPVGDAEFPERAAVVLSGLRKLQGSLAEAASRSRATPSVIVALSGVRTRYDELMTTAAEGPGATLGQRLYVARLRAKLTTAEAANGIGVRKDLIEAVEAEEPATEAETAQIKDLIAALGG</sequence>
<organism>
    <name type="scientific">Mycolicibacterium smegmatis (strain ATCC 700084 / mc(2)155)</name>
    <name type="common">Mycobacterium smegmatis</name>
    <dbReference type="NCBI Taxonomy" id="246196"/>
    <lineage>
        <taxon>Bacteria</taxon>
        <taxon>Bacillati</taxon>
        <taxon>Actinomycetota</taxon>
        <taxon>Actinomycetes</taxon>
        <taxon>Mycobacteriales</taxon>
        <taxon>Mycobacteriaceae</taxon>
        <taxon>Mycolicibacterium</taxon>
    </lineage>
</organism>
<dbReference type="EMBL" id="CP000480">
    <property type="protein sequence ID" value="ABK72372.1"/>
    <property type="molecule type" value="Genomic_DNA"/>
</dbReference>
<dbReference type="EMBL" id="CP001663">
    <property type="protein sequence ID" value="AFP42770.1"/>
    <property type="status" value="ALT_INIT"/>
    <property type="molecule type" value="Genomic_DNA"/>
</dbReference>
<dbReference type="RefSeq" id="WP_003897932.1">
    <property type="nucleotide sequence ID" value="NZ_SIJM01000033.1"/>
</dbReference>
<dbReference type="RefSeq" id="YP_890731.1">
    <property type="nucleotide sequence ID" value="NC_008596.1"/>
</dbReference>
<dbReference type="SMR" id="A0R6E3"/>
<dbReference type="STRING" id="246196.MSMEG_6518"/>
<dbReference type="PaxDb" id="246196-MSMEI_6344"/>
<dbReference type="KEGG" id="msb:LJ00_32220"/>
<dbReference type="KEGG" id="msg:MSMEI_6344"/>
<dbReference type="KEGG" id="msm:MSMEG_6518"/>
<dbReference type="PATRIC" id="fig|246196.19.peg.6342"/>
<dbReference type="eggNOG" id="COG1716">
    <property type="taxonomic scope" value="Bacteria"/>
</dbReference>
<dbReference type="OrthoDB" id="4708740at2"/>
<dbReference type="Proteomes" id="UP000000757">
    <property type="component" value="Chromosome"/>
</dbReference>
<dbReference type="Proteomes" id="UP000006158">
    <property type="component" value="Chromosome"/>
</dbReference>
<name>Y6518_MYCS2</name>
<keyword id="KW-1017">Isopeptide bond</keyword>
<keyword id="KW-1185">Reference proteome</keyword>
<keyword id="KW-0832">Ubl conjugation</keyword>
<reference key="1">
    <citation type="submission" date="2006-10" db="EMBL/GenBank/DDBJ databases">
        <authorList>
            <person name="Fleischmann R.D."/>
            <person name="Dodson R.J."/>
            <person name="Haft D.H."/>
            <person name="Merkel J.S."/>
            <person name="Nelson W.C."/>
            <person name="Fraser C.M."/>
        </authorList>
    </citation>
    <scope>NUCLEOTIDE SEQUENCE [LARGE SCALE GENOMIC DNA]</scope>
    <source>
        <strain>ATCC 700084 / mc(2)155</strain>
    </source>
</reference>
<reference key="2">
    <citation type="journal article" date="2007" name="Genome Biol.">
        <title>Interrupted coding sequences in Mycobacterium smegmatis: authentic mutations or sequencing errors?</title>
        <authorList>
            <person name="Deshayes C."/>
            <person name="Perrodou E."/>
            <person name="Gallien S."/>
            <person name="Euphrasie D."/>
            <person name="Schaeffer C."/>
            <person name="Van-Dorsselaer A."/>
            <person name="Poch O."/>
            <person name="Lecompte O."/>
            <person name="Reyrat J.-M."/>
        </authorList>
    </citation>
    <scope>NUCLEOTIDE SEQUENCE [LARGE SCALE GENOMIC DNA]</scope>
    <source>
        <strain>ATCC 700084 / mc(2)155</strain>
    </source>
</reference>
<reference key="3">
    <citation type="journal article" date="2009" name="Genome Res.">
        <title>Ortho-proteogenomics: multiple proteomes investigation through orthology and a new MS-based protocol.</title>
        <authorList>
            <person name="Gallien S."/>
            <person name="Perrodou E."/>
            <person name="Carapito C."/>
            <person name="Deshayes C."/>
            <person name="Reyrat J.-M."/>
            <person name="Van Dorsselaer A."/>
            <person name="Poch O."/>
            <person name="Schaeffer C."/>
            <person name="Lecompte O."/>
        </authorList>
    </citation>
    <scope>NUCLEOTIDE SEQUENCE [LARGE SCALE GENOMIC DNA]</scope>
    <source>
        <strain>ATCC 700084 / mc(2)155</strain>
    </source>
</reference>
<reference key="4">
    <citation type="journal article" date="2010" name="Mol. Biosyst.">
        <title>Expansion of the mycobacterial 'PUPylome'.</title>
        <authorList>
            <person name="Watrous J."/>
            <person name="Burns K."/>
            <person name="Liu W.T."/>
            <person name="Patel A."/>
            <person name="Hook V."/>
            <person name="Bafna V."/>
            <person name="Barry C.E. III"/>
            <person name="Bark S."/>
            <person name="Dorrestein P.C."/>
        </authorList>
    </citation>
    <scope>PUPYLATION AT LYS-121</scope>
    <scope>IDENTIFICATION BY MASS SPECTROMETRY</scope>
</reference>
<reference key="5">
    <citation type="journal article" date="2018" name="Front. Microbiol.">
        <title>Identification of Enolase as the Target of 2-Aminothiazoles in Mycobacterium tuberculosis.</title>
        <authorList>
            <person name="Wescott H.H."/>
            <person name="Zuniga E.S."/>
            <person name="Bajpai A."/>
            <person name="Trujillo C."/>
            <person name="Ehrt S."/>
            <person name="Schnappinger D."/>
            <person name="Roberts D.M."/>
            <person name="Parish T."/>
        </authorList>
    </citation>
    <scope>IDENTIFICATION BY MASS SPECTROMETRY</scope>
    <scope>INTERACTION WITH 2-AMINOTHIAZOLE ANTIBIOTICS</scope>
    <source>
        <strain>ATCC 700084 / mc(2)155</strain>
    </source>
</reference>
<proteinExistence type="evidence at protein level"/>
<protein>
    <recommendedName>
        <fullName>Uncharacterized protein MSMEG_6518/MSMEI_6344</fullName>
    </recommendedName>
</protein>
<evidence type="ECO:0000269" key="1">
    <source>
    </source>
</evidence>
<evidence type="ECO:0000269" key="2">
    <source>
    </source>
</evidence>
<evidence type="ECO:0000305" key="3"/>